<proteinExistence type="predicted"/>
<sequence>MINQRVAMAEHAKLAPSSAHRWLKCPGSTALEATLPDKTSPFAEEGSAAHALAESILKMRQNPFSDGRRRTYGFDVKEYIGTYPLLKANSPQVDEEMIEHVQTYIDTVWQLANGKMLQVEERVDFSAVIGVDNSFGTADAIIVSSDELQIHDLKYGKGVKVDAQNNEQLMLYALGALHQFDLVYDFKTVRLFIHQPRLNHLSEWAVSVEDLKDFGEQAKSGAQKAMKMATLAERSGLDALPDSAFSPGVKQCLFCKAKGGLCFAQAQFVHNEVKGDFVDLTQPLAPQLSDAPKRITLLTPEKMAKLYPHVDLIESFCKALRNRVAEALHTGQSVPGFKLVTGKQGNRTWGDEREAETLLKGAKLKQEQIYHKKIISPPQAEKLLKKDKPHRWAKLEALIERADGKPVIAPESDPRPAIITTPLNDFDDVTEAALVDKSI</sequence>
<reference key="1">
    <citation type="journal article" date="1999" name="Virology">
        <title>Isolation and characterization of APSE-1, a bacteriophage infecting the secondary endosymbiont of acyrthosiphon pisum.</title>
        <authorList>
            <person name="van der Wilk F."/>
            <person name="Dullemans A.M."/>
            <person name="Verbeek M."/>
            <person name="van den Heuvel J.F.J.M."/>
        </authorList>
    </citation>
    <scope>NUCLEOTIDE SEQUENCE [LARGE SCALE GENOMIC DNA]</scope>
</reference>
<feature type="chain" id="PRO_0000077875" description="Putative protein p51">
    <location>
        <begin position="1"/>
        <end position="439"/>
    </location>
</feature>
<organismHost>
    <name type="scientific">Escherichia coli</name>
    <dbReference type="NCBI Taxonomy" id="562"/>
</organismHost>
<keyword id="KW-1185">Reference proteome</keyword>
<organism>
    <name type="scientific">Acyrthosiphon pisum secondary endosymbiont phage 1</name>
    <name type="common">Bacteriophage APSE-1</name>
    <dbReference type="NCBI Taxonomy" id="2682836"/>
    <lineage>
        <taxon>Viruses</taxon>
        <taxon>Duplodnaviria</taxon>
        <taxon>Heunggongvirae</taxon>
        <taxon>Uroviricota</taxon>
        <taxon>Caudoviricetes</taxon>
        <taxon>Sendosyvirus</taxon>
        <taxon>Sendosyvirus APSE1</taxon>
    </lineage>
</organism>
<name>VP51_BPAPS</name>
<dbReference type="EMBL" id="AF157835">
    <property type="protein sequence ID" value="AAF03994.1"/>
    <property type="molecule type" value="Genomic_DNA"/>
</dbReference>
<dbReference type="RefSeq" id="NP_051012.1">
    <property type="nucleotide sequence ID" value="NC_000935.1"/>
</dbReference>
<dbReference type="KEGG" id="vg:1262345"/>
<dbReference type="Proteomes" id="UP000000853">
    <property type="component" value="Genome"/>
</dbReference>
<dbReference type="Gene3D" id="3.90.320.10">
    <property type="match status" value="1"/>
</dbReference>
<dbReference type="InterPro" id="IPR021229">
    <property type="entry name" value="DUF2800"/>
</dbReference>
<dbReference type="InterPro" id="IPR011604">
    <property type="entry name" value="PDDEXK-like_dom_sf"/>
</dbReference>
<dbReference type="Pfam" id="PF10926">
    <property type="entry name" value="DUF2800"/>
    <property type="match status" value="1"/>
</dbReference>
<accession>Q9T1P7</accession>
<protein>
    <recommendedName>
        <fullName>Putative protein p51</fullName>
    </recommendedName>
</protein>
<gene>
    <name type="primary">51</name>
</gene>